<gene>
    <name type="primary">B19.1A</name>
    <name type="synonym">B19.1</name>
</gene>
<evidence type="ECO:0000256" key="1">
    <source>
        <dbReference type="SAM" id="MobiDB-lite"/>
    </source>
</evidence>
<evidence type="ECO:0000305" key="2"/>
<reference key="1">
    <citation type="journal article" date="1992" name="Plant J.">
        <title>Late embryogenesis-abundant genes encoding proteins with different numbers of hydrophilic repeats are regulated differentially by abscisic acid and osmotic stress.</title>
        <authorList>
            <person name="Espelund M."/>
            <person name="Saeboe-Larssen S."/>
            <person name="Hughes D.W."/>
            <person name="Galau G.A."/>
            <person name="Larsen F."/>
            <person name="Jakobsen K.S."/>
        </authorList>
    </citation>
    <scope>NUCLEOTIDE SEQUENCE [MRNA]</scope>
    <source>
        <strain>cv. Bomi</strain>
        <tissue>Embryo</tissue>
    </source>
</reference>
<feature type="chain" id="PRO_0000185681" description="Late embryogenesis abundant protein B19.1A">
    <location>
        <begin position="1"/>
        <end position="93"/>
    </location>
</feature>
<feature type="region of interest" description="Disordered" evidence="1">
    <location>
        <begin position="1"/>
        <end position="93"/>
    </location>
</feature>
<feature type="compositionally biased region" description="Basic and acidic residues" evidence="1">
    <location>
        <begin position="9"/>
        <end position="19"/>
    </location>
</feature>
<feature type="compositionally biased region" description="Basic and acidic residues" evidence="1">
    <location>
        <begin position="73"/>
        <end position="93"/>
    </location>
</feature>
<protein>
    <recommendedName>
        <fullName>Late embryogenesis abundant protein B19.1A</fullName>
        <shortName>B19.1</shortName>
    </recommendedName>
</protein>
<proteinExistence type="evidence at transcript level"/>
<dbReference type="EMBL" id="X62805">
    <property type="status" value="NOT_ANNOTATED_CDS"/>
    <property type="molecule type" value="mRNA"/>
</dbReference>
<dbReference type="EMBL" id="X62804">
    <property type="protein sequence ID" value="CAA44622.1"/>
    <property type="molecule type" value="mRNA"/>
</dbReference>
<dbReference type="PIR" id="S23749">
    <property type="entry name" value="S23749"/>
</dbReference>
<dbReference type="SMR" id="Q05190"/>
<dbReference type="GO" id="GO:0005829">
    <property type="term" value="C:cytosol"/>
    <property type="evidence" value="ECO:0007669"/>
    <property type="project" value="TreeGrafter"/>
</dbReference>
<dbReference type="GO" id="GO:0009737">
    <property type="term" value="P:response to abscisic acid"/>
    <property type="evidence" value="ECO:0007669"/>
    <property type="project" value="TreeGrafter"/>
</dbReference>
<dbReference type="InterPro" id="IPR038956">
    <property type="entry name" value="LEA_5"/>
</dbReference>
<dbReference type="InterPro" id="IPR022377">
    <property type="entry name" value="Sm_Hydphi_plant_seed_CS"/>
</dbReference>
<dbReference type="InterPro" id="IPR000389">
    <property type="entry name" value="Small_hydrophilic_seed_prot"/>
</dbReference>
<dbReference type="PANTHER" id="PTHR34671:SF14">
    <property type="entry name" value="EM PROTEIN"/>
    <property type="match status" value="1"/>
</dbReference>
<dbReference type="PANTHER" id="PTHR34671">
    <property type="entry name" value="EM-LIKE PROTEIN GEA1"/>
    <property type="match status" value="1"/>
</dbReference>
<dbReference type="Pfam" id="PF00477">
    <property type="entry name" value="LEA_5"/>
    <property type="match status" value="1"/>
</dbReference>
<dbReference type="PROSITE" id="PS00431">
    <property type="entry name" value="SMALL_HYDR_PLANT_SEED"/>
    <property type="match status" value="1"/>
</dbReference>
<keyword id="KW-0346">Stress response</keyword>
<name>LE19A_HORVU</name>
<accession>Q05190</accession>
<sequence length="93" mass="9962">MASGQQERSQLDRKAREGETVVPGGTGGKSLEAQQNLAEGRSRGGQTRREQMGQEGYSEMGRKGGLSSNDESGGERAAREGIDIDESKFKTKS</sequence>
<organism>
    <name type="scientific">Hordeum vulgare</name>
    <name type="common">Barley</name>
    <dbReference type="NCBI Taxonomy" id="4513"/>
    <lineage>
        <taxon>Eukaryota</taxon>
        <taxon>Viridiplantae</taxon>
        <taxon>Streptophyta</taxon>
        <taxon>Embryophyta</taxon>
        <taxon>Tracheophyta</taxon>
        <taxon>Spermatophyta</taxon>
        <taxon>Magnoliopsida</taxon>
        <taxon>Liliopsida</taxon>
        <taxon>Poales</taxon>
        <taxon>Poaceae</taxon>
        <taxon>BOP clade</taxon>
        <taxon>Pooideae</taxon>
        <taxon>Triticodae</taxon>
        <taxon>Triticeae</taxon>
        <taxon>Hordeinae</taxon>
        <taxon>Hordeum</taxon>
    </lineage>
</organism>
<comment type="function">
    <text>Lea proteins are late embryonic proteins abundant in higher plant seed embryos. It may have a role in desiccation tolerance by acting as an osmoprotective protein or as a desiccation-damage repair protein.</text>
</comment>
<comment type="tissue specificity">
    <text>Embryos and young seedlings.</text>
</comment>
<comment type="developmental stage">
    <text>Most abundant just before terminal desiccation of the embryo.</text>
</comment>
<comment type="induction">
    <text>By abscisic acid (ABA), osmotic stress and salt.</text>
</comment>
<comment type="similarity">
    <text evidence="2">Belongs to the small hydrophilic plant seed protein family.</text>
</comment>